<keyword id="KW-1185">Reference proteome</keyword>
<name>YL685_MIMIV</name>
<dbReference type="EMBL" id="AY653733">
    <property type="protein sequence ID" value="AAV50946.1"/>
    <property type="molecule type" value="Genomic_DNA"/>
</dbReference>
<dbReference type="KEGG" id="vg:9925335"/>
<dbReference type="Proteomes" id="UP000001134">
    <property type="component" value="Genome"/>
</dbReference>
<dbReference type="InterPro" id="IPR043908">
    <property type="entry name" value="DUF5769"/>
</dbReference>
<dbReference type="Pfam" id="PF19073">
    <property type="entry name" value="DUF5769"/>
    <property type="match status" value="1"/>
</dbReference>
<organism>
    <name type="scientific">Acanthamoeba polyphaga mimivirus</name>
    <name type="common">APMV</name>
    <dbReference type="NCBI Taxonomy" id="212035"/>
    <lineage>
        <taxon>Viruses</taxon>
        <taxon>Varidnaviria</taxon>
        <taxon>Bamfordvirae</taxon>
        <taxon>Nucleocytoviricota</taxon>
        <taxon>Megaviricetes</taxon>
        <taxon>Imitervirales</taxon>
        <taxon>Mimiviridae</taxon>
        <taxon>Megamimivirinae</taxon>
        <taxon>Mimivirus</taxon>
        <taxon>Mimivirus bradfordmassiliense</taxon>
    </lineage>
</organism>
<comment type="similarity">
    <text evidence="1">Belongs to the mimivirus R69 family.</text>
</comment>
<proteinExistence type="inferred from homology"/>
<accession>Q5UNU4</accession>
<feature type="chain" id="PRO_0000071317" description="Uncharacterized protein L685">
    <location>
        <begin position="1"/>
        <end position="337"/>
    </location>
</feature>
<evidence type="ECO:0000305" key="1"/>
<organismHost>
    <name type="scientific">Acanthamoeba polyphaga</name>
    <name type="common">Amoeba</name>
    <dbReference type="NCBI Taxonomy" id="5757"/>
</organismHost>
<reference key="1">
    <citation type="journal article" date="2004" name="Science">
        <title>The 1.2-megabase genome sequence of Mimivirus.</title>
        <authorList>
            <person name="Raoult D."/>
            <person name="Audic S."/>
            <person name="Robert C."/>
            <person name="Abergel C."/>
            <person name="Renesto P."/>
            <person name="Ogata H."/>
            <person name="La Scola B."/>
            <person name="Susan M."/>
            <person name="Claverie J.-M."/>
        </authorList>
    </citation>
    <scope>NUCLEOTIDE SEQUENCE [LARGE SCALE GENOMIC DNA]</scope>
    <source>
        <strain>Rowbotham-Bradford</strain>
    </source>
</reference>
<protein>
    <recommendedName>
        <fullName>Uncharacterized protein L685</fullName>
    </recommendedName>
</protein>
<gene>
    <name type="ordered locus">MIMI_L685</name>
</gene>
<sequence>MQFMTISNDNKIVLSIPMLSTLSLNCLVKITGSISQSKQLLVENNLLLSNFEIIYNNLVSIKRQIIYKDIFDKMFSYKLRKHPISLNSFYKDNIFYLKGMYLANLFSDKVSKNINSKCIFGMNSISDIIINMRTQKITHRNPKVLCKKINKLNKYTVDEVVEKGEIFEQSVNYIIIKDKYHPEFFVKIKFETNYIYDFFDIECLEYSCNIGDKDLKVIPKITNPNLSVGKVIDNCRNKKFRILSIGKPIIKHDCTNIIVDENGYVSGSMKNCIDRYSCYGNYILRKYRKLINDGWQCLNEVCDNPVCILAQEDFAEKMYKLRKSYDESVPQLEEVNE</sequence>